<keyword id="KW-0256">Endoplasmic reticulum</keyword>
<keyword id="KW-0325">Glycoprotein</keyword>
<keyword id="KW-0472">Membrane</keyword>
<keyword id="KW-0597">Phosphoprotein</keyword>
<keyword id="KW-1185">Reference proteome</keyword>
<keyword id="KW-0812">Transmembrane</keyword>
<keyword id="KW-1133">Transmembrane helix</keyword>
<gene>
    <name evidence="8" type="ORF">SPBC13G1.05</name>
</gene>
<organism>
    <name type="scientific">Schizosaccharomyces pombe (strain 972 / ATCC 24843)</name>
    <name type="common">Fission yeast</name>
    <dbReference type="NCBI Taxonomy" id="284812"/>
    <lineage>
        <taxon>Eukaryota</taxon>
        <taxon>Fungi</taxon>
        <taxon>Dikarya</taxon>
        <taxon>Ascomycota</taxon>
        <taxon>Taphrinomycotina</taxon>
        <taxon>Schizosaccharomycetes</taxon>
        <taxon>Schizosaccharomycetales</taxon>
        <taxon>Schizosaccharomycetaceae</taxon>
        <taxon>Schizosaccharomyces</taxon>
    </lineage>
</organism>
<sequence>MGSNTSPGQADPLESENESSLTSRFLPNKRDGGKDNESVIPEKEEPDLNEPVLAVPLPKSRYALTKRSSSSEYPRRSASTSAKKNVIPITRSYSTTFFSKTNDQPTVTGNQDKPISRLRASKLQIQNFWNYICFELLANDTVPANPIKEKHVENFLATPYAIEKTFLFGWFVSVDSFLYIFTLFPIRVLISFFTLSRCIFQGLFSTFFHRNSSPNRSLPRSRKIDLLKLLLIFSTSILIRKIDVSRLYHIIRAQASIRFYVLYNVLEIADRLCCALGQDVLDCLFSNHILSFNFWNPAGWMTFFYYFAISLAYMVLHTLVLLYQIITLNVTVNSYSNAVLALLMSNQLVEIKGAVFKKFEKENLFQLTCSDVVERFQITIMVIIIFLRNLAELYTTSSLDQPLLTFKRLKTLLAPFFWVIGSELFVDWLKHAFIIKFNYIKPSIYSRFTDVLCHDYVASGAQLTQTVTGCSQQVARRMGLPVLPLVCVFIRTSMQTWSMFRSTHSMKQEIAKSIGTIFPTKDNYVYYLPNKEANTYNAGKEASWETLLLSVVRGKSGIAFLFFMAIMLKLLLGKAILAITQSRYESMQQREEKINSWERERKANNFFRGHIEIDKKTKDFLNNSKDDLPVPKSPLLTLERYAMHSKRIW</sequence>
<reference key="1">
    <citation type="journal article" date="2002" name="Nature">
        <title>The genome sequence of Schizosaccharomyces pombe.</title>
        <authorList>
            <person name="Wood V."/>
            <person name="Gwilliam R."/>
            <person name="Rajandream M.A."/>
            <person name="Lyne M.H."/>
            <person name="Lyne R."/>
            <person name="Stewart A."/>
            <person name="Sgouros J.G."/>
            <person name="Peat N."/>
            <person name="Hayles J."/>
            <person name="Baker S.G."/>
            <person name="Basham D."/>
            <person name="Bowman S."/>
            <person name="Brooks K."/>
            <person name="Brown D."/>
            <person name="Brown S."/>
            <person name="Chillingworth T."/>
            <person name="Churcher C.M."/>
            <person name="Collins M."/>
            <person name="Connor R."/>
            <person name="Cronin A."/>
            <person name="Davis P."/>
            <person name="Feltwell T."/>
            <person name="Fraser A."/>
            <person name="Gentles S."/>
            <person name="Goble A."/>
            <person name="Hamlin N."/>
            <person name="Harris D.E."/>
            <person name="Hidalgo J."/>
            <person name="Hodgson G."/>
            <person name="Holroyd S."/>
            <person name="Hornsby T."/>
            <person name="Howarth S."/>
            <person name="Huckle E.J."/>
            <person name="Hunt S."/>
            <person name="Jagels K."/>
            <person name="James K.D."/>
            <person name="Jones L."/>
            <person name="Jones M."/>
            <person name="Leather S."/>
            <person name="McDonald S."/>
            <person name="McLean J."/>
            <person name="Mooney P."/>
            <person name="Moule S."/>
            <person name="Mungall K.L."/>
            <person name="Murphy L.D."/>
            <person name="Niblett D."/>
            <person name="Odell C."/>
            <person name="Oliver K."/>
            <person name="O'Neil S."/>
            <person name="Pearson D."/>
            <person name="Quail M.A."/>
            <person name="Rabbinowitsch E."/>
            <person name="Rutherford K.M."/>
            <person name="Rutter S."/>
            <person name="Saunders D."/>
            <person name="Seeger K."/>
            <person name="Sharp S."/>
            <person name="Skelton J."/>
            <person name="Simmonds M.N."/>
            <person name="Squares R."/>
            <person name="Squares S."/>
            <person name="Stevens K."/>
            <person name="Taylor K."/>
            <person name="Taylor R.G."/>
            <person name="Tivey A."/>
            <person name="Walsh S.V."/>
            <person name="Warren T."/>
            <person name="Whitehead S."/>
            <person name="Woodward J.R."/>
            <person name="Volckaert G."/>
            <person name="Aert R."/>
            <person name="Robben J."/>
            <person name="Grymonprez B."/>
            <person name="Weltjens I."/>
            <person name="Vanstreels E."/>
            <person name="Rieger M."/>
            <person name="Schaefer M."/>
            <person name="Mueller-Auer S."/>
            <person name="Gabel C."/>
            <person name="Fuchs M."/>
            <person name="Duesterhoeft A."/>
            <person name="Fritzc C."/>
            <person name="Holzer E."/>
            <person name="Moestl D."/>
            <person name="Hilbert H."/>
            <person name="Borzym K."/>
            <person name="Langer I."/>
            <person name="Beck A."/>
            <person name="Lehrach H."/>
            <person name="Reinhardt R."/>
            <person name="Pohl T.M."/>
            <person name="Eger P."/>
            <person name="Zimmermann W."/>
            <person name="Wedler H."/>
            <person name="Wambutt R."/>
            <person name="Purnelle B."/>
            <person name="Goffeau A."/>
            <person name="Cadieu E."/>
            <person name="Dreano S."/>
            <person name="Gloux S."/>
            <person name="Lelaure V."/>
            <person name="Mottier S."/>
            <person name="Galibert F."/>
            <person name="Aves S.J."/>
            <person name="Xiang Z."/>
            <person name="Hunt C."/>
            <person name="Moore K."/>
            <person name="Hurst S.M."/>
            <person name="Lucas M."/>
            <person name="Rochet M."/>
            <person name="Gaillardin C."/>
            <person name="Tallada V.A."/>
            <person name="Garzon A."/>
            <person name="Thode G."/>
            <person name="Daga R.R."/>
            <person name="Cruzado L."/>
            <person name="Jimenez J."/>
            <person name="Sanchez M."/>
            <person name="del Rey F."/>
            <person name="Benito J."/>
            <person name="Dominguez A."/>
            <person name="Revuelta J.L."/>
            <person name="Moreno S."/>
            <person name="Armstrong J."/>
            <person name="Forsburg S.L."/>
            <person name="Cerutti L."/>
            <person name="Lowe T."/>
            <person name="McCombie W.R."/>
            <person name="Paulsen I."/>
            <person name="Potashkin J."/>
            <person name="Shpakovski G.V."/>
            <person name="Ussery D."/>
            <person name="Barrell B.G."/>
            <person name="Nurse P."/>
        </authorList>
    </citation>
    <scope>NUCLEOTIDE SEQUENCE [LARGE SCALE GENOMIC DNA]</scope>
    <source>
        <strain>972 / ATCC 24843</strain>
    </source>
</reference>
<reference key="2">
    <citation type="journal article" date="2006" name="Nat. Biotechnol.">
        <title>ORFeome cloning and global analysis of protein localization in the fission yeast Schizosaccharomyces pombe.</title>
        <authorList>
            <person name="Matsuyama A."/>
            <person name="Arai R."/>
            <person name="Yashiroda Y."/>
            <person name="Shirai A."/>
            <person name="Kamata A."/>
            <person name="Sekido S."/>
            <person name="Kobayashi Y."/>
            <person name="Hashimoto A."/>
            <person name="Hamamoto M."/>
            <person name="Hiraoka Y."/>
            <person name="Horinouchi S."/>
            <person name="Yoshida M."/>
        </authorList>
    </citation>
    <scope>SUBCELLULAR LOCATION [LARGE SCALE ANALYSIS]</scope>
</reference>
<reference key="3">
    <citation type="journal article" date="2008" name="J. Proteome Res.">
        <title>Phosphoproteome analysis of fission yeast.</title>
        <authorList>
            <person name="Wilson-Grady J.T."/>
            <person name="Villen J."/>
            <person name="Gygi S.P."/>
        </authorList>
    </citation>
    <scope>PHOSPHORYLATION [LARGE SCALE ANALYSIS] AT SER-94</scope>
    <scope>IDENTIFICATION BY MASS SPECTROMETRY</scope>
</reference>
<feature type="chain" id="PRO_0000328879" description="Endoplasmic reticulum membrane protein 65">
    <location>
        <begin position="1"/>
        <end position="649"/>
    </location>
</feature>
<feature type="topological domain" description="Cytoplasmic" evidence="1">
    <location>
        <begin position="1"/>
        <end position="165"/>
    </location>
</feature>
<feature type="transmembrane region" description="Helical; Name=1" evidence="2">
    <location>
        <begin position="166"/>
        <end position="186"/>
    </location>
</feature>
<feature type="topological domain" description="Lumenal" evidence="1">
    <location>
        <begin position="187"/>
        <end position="302"/>
    </location>
</feature>
<feature type="transmembrane region" description="Helical; Name=2" evidence="2">
    <location>
        <begin position="303"/>
        <end position="323"/>
    </location>
</feature>
<feature type="topological domain" description="Cytoplasmic" evidence="1">
    <location>
        <begin position="324"/>
        <end position="366"/>
    </location>
</feature>
<feature type="transmembrane region" description="Helical; Name=3" evidence="2">
    <location>
        <begin position="367"/>
        <end position="387"/>
    </location>
</feature>
<feature type="topological domain" description="Lumenal" evidence="1">
    <location>
        <begin position="388"/>
        <end position="414"/>
    </location>
</feature>
<feature type="transmembrane region" description="Helical; Name=4" evidence="2">
    <location>
        <begin position="415"/>
        <end position="435"/>
    </location>
</feature>
<feature type="topological domain" description="Cytoplasmic" evidence="1">
    <location>
        <begin position="436"/>
        <end position="479"/>
    </location>
</feature>
<feature type="transmembrane region" description="Helical; Name=5" evidence="2">
    <location>
        <begin position="480"/>
        <end position="500"/>
    </location>
</feature>
<feature type="topological domain" description="Lumenal" evidence="1">
    <location>
        <begin position="501"/>
        <end position="557"/>
    </location>
</feature>
<feature type="transmembrane region" description="Helical; Name=6" evidence="2">
    <location>
        <begin position="558"/>
        <end position="578"/>
    </location>
</feature>
<feature type="topological domain" description="Cytoplasmic" evidence="1">
    <location>
        <begin position="579"/>
        <end position="649"/>
    </location>
</feature>
<feature type="region of interest" description="Disordered" evidence="4">
    <location>
        <begin position="1"/>
        <end position="55"/>
    </location>
</feature>
<feature type="compositionally biased region" description="Basic and acidic residues" evidence="4">
    <location>
        <begin position="28"/>
        <end position="43"/>
    </location>
</feature>
<feature type="modified residue" description="Phosphoserine" evidence="6">
    <location>
        <position position="94"/>
    </location>
</feature>
<feature type="glycosylation site" description="N-linked (GlcNAc...) asparagine" evidence="3">
    <location>
        <position position="215"/>
    </location>
</feature>
<protein>
    <recommendedName>
        <fullName evidence="1">Endoplasmic reticulum membrane protein 65</fullName>
    </recommendedName>
</protein>
<name>TAPT1_SCHPO</name>
<comment type="function">
    <text evidence="1">May be involved in membrane protein folding.</text>
</comment>
<comment type="subunit">
    <text evidence="1">Interacts with slp1.</text>
</comment>
<comment type="subcellular location">
    <subcellularLocation>
        <location evidence="5">Endoplasmic reticulum membrane</location>
        <topology evidence="2">Multi-pass membrane protein</topology>
    </subcellularLocation>
</comment>
<comment type="similarity">
    <text evidence="7">Belongs to the TAPT1 family.</text>
</comment>
<accession>O60067</accession>
<dbReference type="EMBL" id="CU329671">
    <property type="protein sequence ID" value="CAA18658.1"/>
    <property type="molecule type" value="Genomic_DNA"/>
</dbReference>
<dbReference type="PIR" id="T39406">
    <property type="entry name" value="T39406"/>
</dbReference>
<dbReference type="RefSeq" id="NP_596554.1">
    <property type="nucleotide sequence ID" value="NM_001022475.2"/>
</dbReference>
<dbReference type="FunCoup" id="O60067">
    <property type="interactions" value="76"/>
</dbReference>
<dbReference type="STRING" id="284812.O60067"/>
<dbReference type="iPTMnet" id="O60067"/>
<dbReference type="PaxDb" id="4896-SPBC13G1.05.1"/>
<dbReference type="EnsemblFungi" id="SPBC13G1.05.1">
    <property type="protein sequence ID" value="SPBC13G1.05.1:pep"/>
    <property type="gene ID" value="SPBC13G1.05"/>
</dbReference>
<dbReference type="KEGG" id="spo:2539819"/>
<dbReference type="PomBase" id="SPBC13G1.05"/>
<dbReference type="VEuPathDB" id="FungiDB:SPBC13G1.05"/>
<dbReference type="eggNOG" id="KOG2490">
    <property type="taxonomic scope" value="Eukaryota"/>
</dbReference>
<dbReference type="HOGENOM" id="CLU_003655_1_1_1"/>
<dbReference type="InParanoid" id="O60067"/>
<dbReference type="OMA" id="KTFLFGW"/>
<dbReference type="PhylomeDB" id="O60067"/>
<dbReference type="PRO" id="PR:O60067"/>
<dbReference type="Proteomes" id="UP000002485">
    <property type="component" value="Chromosome II"/>
</dbReference>
<dbReference type="GO" id="GO:0005783">
    <property type="term" value="C:endoplasmic reticulum"/>
    <property type="evidence" value="ECO:0007005"/>
    <property type="project" value="PomBase"/>
</dbReference>
<dbReference type="GO" id="GO:0005789">
    <property type="term" value="C:endoplasmic reticulum membrane"/>
    <property type="evidence" value="ECO:0000318"/>
    <property type="project" value="GO_Central"/>
</dbReference>
<dbReference type="GO" id="GO:0005794">
    <property type="term" value="C:Golgi apparatus"/>
    <property type="evidence" value="ECO:0007005"/>
    <property type="project" value="PomBase"/>
</dbReference>
<dbReference type="GO" id="GO:0034975">
    <property type="term" value="P:protein folding in endoplasmic reticulum"/>
    <property type="evidence" value="ECO:0000266"/>
    <property type="project" value="PomBase"/>
</dbReference>
<dbReference type="InterPro" id="IPR008010">
    <property type="entry name" value="Tatp1"/>
</dbReference>
<dbReference type="PANTHER" id="PTHR13317">
    <property type="entry name" value="TRANSMEMBRANE ANTERIOR POSTERIOR TRANSFORMATION PROTEIN 1 HOMOLOG"/>
    <property type="match status" value="1"/>
</dbReference>
<dbReference type="PANTHER" id="PTHR13317:SF4">
    <property type="entry name" value="TRANSMEMBRANE ANTERIOR POSTERIOR TRANSFORMATION PROTEIN 1 HOMOLOG"/>
    <property type="match status" value="1"/>
</dbReference>
<dbReference type="Pfam" id="PF05346">
    <property type="entry name" value="DUF747"/>
    <property type="match status" value="1"/>
</dbReference>
<proteinExistence type="evidence at protein level"/>
<evidence type="ECO:0000250" key="1">
    <source>
        <dbReference type="UniProtKB" id="P40085"/>
    </source>
</evidence>
<evidence type="ECO:0000255" key="2"/>
<evidence type="ECO:0000255" key="3">
    <source>
        <dbReference type="PROSITE-ProRule" id="PRU00498"/>
    </source>
</evidence>
<evidence type="ECO:0000256" key="4">
    <source>
        <dbReference type="SAM" id="MobiDB-lite"/>
    </source>
</evidence>
<evidence type="ECO:0000269" key="5">
    <source>
    </source>
</evidence>
<evidence type="ECO:0000269" key="6">
    <source>
    </source>
</evidence>
<evidence type="ECO:0000305" key="7"/>
<evidence type="ECO:0000312" key="8">
    <source>
        <dbReference type="PomBase" id="SPBC13G1.05"/>
    </source>
</evidence>